<comment type="function">
    <text evidence="1">Binds as a heterodimer with protein bS6 to the central domain of the 16S rRNA, where it helps stabilize the platform of the 30S subunit.</text>
</comment>
<comment type="subunit">
    <text evidence="1">Part of the 30S ribosomal subunit. Forms a tight heterodimer with protein bS6.</text>
</comment>
<comment type="similarity">
    <text evidence="1">Belongs to the bacterial ribosomal protein bS18 family.</text>
</comment>
<gene>
    <name evidence="1" type="primary">rpsR</name>
    <name type="ordered locus">BALH_4980</name>
</gene>
<dbReference type="EMBL" id="CP000485">
    <property type="protein sequence ID" value="ABK88144.1"/>
    <property type="molecule type" value="Genomic_DNA"/>
</dbReference>
<dbReference type="RefSeq" id="WP_000918874.1">
    <property type="nucleotide sequence ID" value="NC_008600.1"/>
</dbReference>
<dbReference type="SMR" id="A0RLQ1"/>
<dbReference type="GeneID" id="92885945"/>
<dbReference type="KEGG" id="btl:BALH_4980"/>
<dbReference type="HOGENOM" id="CLU_148710_2_2_9"/>
<dbReference type="GO" id="GO:0022627">
    <property type="term" value="C:cytosolic small ribosomal subunit"/>
    <property type="evidence" value="ECO:0007669"/>
    <property type="project" value="TreeGrafter"/>
</dbReference>
<dbReference type="GO" id="GO:0070181">
    <property type="term" value="F:small ribosomal subunit rRNA binding"/>
    <property type="evidence" value="ECO:0007669"/>
    <property type="project" value="TreeGrafter"/>
</dbReference>
<dbReference type="GO" id="GO:0003735">
    <property type="term" value="F:structural constituent of ribosome"/>
    <property type="evidence" value="ECO:0007669"/>
    <property type="project" value="InterPro"/>
</dbReference>
<dbReference type="GO" id="GO:0006412">
    <property type="term" value="P:translation"/>
    <property type="evidence" value="ECO:0007669"/>
    <property type="project" value="UniProtKB-UniRule"/>
</dbReference>
<dbReference type="FunFam" id="4.10.640.10:FF:000003">
    <property type="entry name" value="30S ribosomal protein S18"/>
    <property type="match status" value="1"/>
</dbReference>
<dbReference type="Gene3D" id="4.10.640.10">
    <property type="entry name" value="Ribosomal protein S18"/>
    <property type="match status" value="1"/>
</dbReference>
<dbReference type="HAMAP" id="MF_00270">
    <property type="entry name" value="Ribosomal_bS18"/>
    <property type="match status" value="1"/>
</dbReference>
<dbReference type="InterPro" id="IPR001648">
    <property type="entry name" value="Ribosomal_bS18"/>
</dbReference>
<dbReference type="InterPro" id="IPR018275">
    <property type="entry name" value="Ribosomal_bS18_CS"/>
</dbReference>
<dbReference type="InterPro" id="IPR036870">
    <property type="entry name" value="Ribosomal_bS18_sf"/>
</dbReference>
<dbReference type="NCBIfam" id="TIGR00165">
    <property type="entry name" value="S18"/>
    <property type="match status" value="1"/>
</dbReference>
<dbReference type="PANTHER" id="PTHR13479">
    <property type="entry name" value="30S RIBOSOMAL PROTEIN S18"/>
    <property type="match status" value="1"/>
</dbReference>
<dbReference type="PANTHER" id="PTHR13479:SF40">
    <property type="entry name" value="SMALL RIBOSOMAL SUBUNIT PROTEIN BS18M"/>
    <property type="match status" value="1"/>
</dbReference>
<dbReference type="Pfam" id="PF01084">
    <property type="entry name" value="Ribosomal_S18"/>
    <property type="match status" value="1"/>
</dbReference>
<dbReference type="PRINTS" id="PR00974">
    <property type="entry name" value="RIBOSOMALS18"/>
</dbReference>
<dbReference type="SUPFAM" id="SSF46911">
    <property type="entry name" value="Ribosomal protein S18"/>
    <property type="match status" value="1"/>
</dbReference>
<dbReference type="PROSITE" id="PS00057">
    <property type="entry name" value="RIBOSOMAL_S18"/>
    <property type="match status" value="1"/>
</dbReference>
<keyword id="KW-0687">Ribonucleoprotein</keyword>
<keyword id="KW-0689">Ribosomal protein</keyword>
<keyword id="KW-0694">RNA-binding</keyword>
<keyword id="KW-0699">rRNA-binding</keyword>
<protein>
    <recommendedName>
        <fullName evidence="1">Small ribosomal subunit protein bS18</fullName>
    </recommendedName>
    <alternativeName>
        <fullName evidence="2">30S ribosomal protein S18</fullName>
    </alternativeName>
</protein>
<proteinExistence type="inferred from homology"/>
<sequence length="77" mass="8829">MAGRKGGRAKRRKVCFFTSNGITRIDYKDVDLLKRFVSERGKILPRRVTGTSAKYQRKLTVAIKRARQMALLPYVGE</sequence>
<feature type="chain" id="PRO_1000003442" description="Small ribosomal subunit protein bS18">
    <location>
        <begin position="1"/>
        <end position="77"/>
    </location>
</feature>
<accession>A0RLQ1</accession>
<evidence type="ECO:0000255" key="1">
    <source>
        <dbReference type="HAMAP-Rule" id="MF_00270"/>
    </source>
</evidence>
<evidence type="ECO:0000305" key="2"/>
<name>RS18_BACAH</name>
<organism>
    <name type="scientific">Bacillus thuringiensis (strain Al Hakam)</name>
    <dbReference type="NCBI Taxonomy" id="412694"/>
    <lineage>
        <taxon>Bacteria</taxon>
        <taxon>Bacillati</taxon>
        <taxon>Bacillota</taxon>
        <taxon>Bacilli</taxon>
        <taxon>Bacillales</taxon>
        <taxon>Bacillaceae</taxon>
        <taxon>Bacillus</taxon>
        <taxon>Bacillus cereus group</taxon>
    </lineage>
</organism>
<reference key="1">
    <citation type="journal article" date="2007" name="J. Bacteriol.">
        <title>The complete genome sequence of Bacillus thuringiensis Al Hakam.</title>
        <authorList>
            <person name="Challacombe J.F."/>
            <person name="Altherr M.R."/>
            <person name="Xie G."/>
            <person name="Bhotika S.S."/>
            <person name="Brown N."/>
            <person name="Bruce D."/>
            <person name="Campbell C.S."/>
            <person name="Campbell M.L."/>
            <person name="Chen J."/>
            <person name="Chertkov O."/>
            <person name="Cleland C."/>
            <person name="Dimitrijevic M."/>
            <person name="Doggett N.A."/>
            <person name="Fawcett J.J."/>
            <person name="Glavina T."/>
            <person name="Goodwin L.A."/>
            <person name="Green L.D."/>
            <person name="Han C.S."/>
            <person name="Hill K.K."/>
            <person name="Hitchcock P."/>
            <person name="Jackson P.J."/>
            <person name="Keim P."/>
            <person name="Kewalramani A.R."/>
            <person name="Longmire J."/>
            <person name="Lucas S."/>
            <person name="Malfatti S."/>
            <person name="Martinez D."/>
            <person name="McMurry K."/>
            <person name="Meincke L.J."/>
            <person name="Misra M."/>
            <person name="Moseman B.L."/>
            <person name="Mundt M."/>
            <person name="Munk A.C."/>
            <person name="Okinaka R.T."/>
            <person name="Parson-Quintana B."/>
            <person name="Reilly L.P."/>
            <person name="Richardson P."/>
            <person name="Robinson D.L."/>
            <person name="Saunders E."/>
            <person name="Tapia R."/>
            <person name="Tesmer J.G."/>
            <person name="Thayer N."/>
            <person name="Thompson L.S."/>
            <person name="Tice H."/>
            <person name="Ticknor L.O."/>
            <person name="Wills P.L."/>
            <person name="Gilna P."/>
            <person name="Brettin T.S."/>
        </authorList>
    </citation>
    <scope>NUCLEOTIDE SEQUENCE [LARGE SCALE GENOMIC DNA]</scope>
    <source>
        <strain>Al Hakam</strain>
    </source>
</reference>